<gene>
    <name type="primary">Rims3</name>
    <name type="synonym">Nim3</name>
</gene>
<sequence length="307" mass="32651">MFNGEPGPASAGASRNVVRSSSISGEICGSQQAGGGAGTTTAKKRRSSLGAKMVAIVGLTQWSKSTLQLPQPEGATKKLRSNIRRSTETGIAVEMRSRVTRQGSRESTDGSTNSNSSEGTFIFPTRLGAESQFSDFLDGLGPAQIVGRQTLATPPMGDVHIAIMDRSGQLEVEVIEARGLTPKPGSKSLPATYIKAYLLENGACVAKKKTKVAKKTCDPLYQQALLFDEGPQGKVLQVIVWGDYGRMDHKCFMGMAQIMLDELDLSAVVTGWYKFFPTSSVADSTLGSLTRRLSQSSLESATSPSCS</sequence>
<dbReference type="EMBL" id="AF199334">
    <property type="protein sequence ID" value="AAF81656.1"/>
    <property type="molecule type" value="mRNA"/>
</dbReference>
<dbReference type="RefSeq" id="NP_075220.1">
    <property type="nucleotide sequence ID" value="NM_022931.1"/>
</dbReference>
<dbReference type="SMR" id="Q9JIR3"/>
<dbReference type="FunCoup" id="Q9JIR3">
    <property type="interactions" value="1762"/>
</dbReference>
<dbReference type="STRING" id="10116.ENSRNOP00000015034"/>
<dbReference type="iPTMnet" id="Q9JIR3"/>
<dbReference type="PhosphoSitePlus" id="Q9JIR3"/>
<dbReference type="PaxDb" id="10116-ENSRNOP00000015034"/>
<dbReference type="GeneID" id="65025"/>
<dbReference type="KEGG" id="rno:65025"/>
<dbReference type="AGR" id="RGD:628762"/>
<dbReference type="CTD" id="9783"/>
<dbReference type="RGD" id="628762">
    <property type="gene designation" value="Rims3"/>
</dbReference>
<dbReference type="eggNOG" id="KOG2060">
    <property type="taxonomic scope" value="Eukaryota"/>
</dbReference>
<dbReference type="InParanoid" id="Q9JIR3"/>
<dbReference type="PhylomeDB" id="Q9JIR3"/>
<dbReference type="PRO" id="PR:Q9JIR3"/>
<dbReference type="Proteomes" id="UP000002494">
    <property type="component" value="Unplaced"/>
</dbReference>
<dbReference type="GO" id="GO:0098978">
    <property type="term" value="C:glutamatergic synapse"/>
    <property type="evidence" value="ECO:0000314"/>
    <property type="project" value="SynGO"/>
</dbReference>
<dbReference type="GO" id="GO:0099524">
    <property type="term" value="C:postsynaptic cytosol"/>
    <property type="evidence" value="ECO:0000314"/>
    <property type="project" value="SynGO"/>
</dbReference>
<dbReference type="GO" id="GO:0098831">
    <property type="term" value="C:presynaptic active zone cytoplasmic component"/>
    <property type="evidence" value="ECO:0000318"/>
    <property type="project" value="GO_Central"/>
</dbReference>
<dbReference type="GO" id="GO:0042734">
    <property type="term" value="C:presynaptic membrane"/>
    <property type="evidence" value="ECO:0000318"/>
    <property type="project" value="GO_Central"/>
</dbReference>
<dbReference type="GO" id="GO:0031267">
    <property type="term" value="F:small GTPase binding"/>
    <property type="evidence" value="ECO:0007669"/>
    <property type="project" value="InterPro"/>
</dbReference>
<dbReference type="GO" id="GO:0098882">
    <property type="term" value="F:structural constituent of presynaptic active zone"/>
    <property type="evidence" value="ECO:0000318"/>
    <property type="project" value="GO_Central"/>
</dbReference>
<dbReference type="GO" id="GO:0044325">
    <property type="term" value="F:transmembrane transporter binding"/>
    <property type="evidence" value="ECO:0000250"/>
    <property type="project" value="ParkinsonsUK-UCL"/>
</dbReference>
<dbReference type="GO" id="GO:0017156">
    <property type="term" value="P:calcium-ion regulated exocytosis"/>
    <property type="evidence" value="ECO:0000314"/>
    <property type="project" value="RGD"/>
</dbReference>
<dbReference type="GO" id="GO:0042391">
    <property type="term" value="P:regulation of membrane potential"/>
    <property type="evidence" value="ECO:0000250"/>
    <property type="project" value="ParkinsonsUK-UCL"/>
</dbReference>
<dbReference type="GO" id="GO:0050807">
    <property type="term" value="P:regulation of synapse organization"/>
    <property type="evidence" value="ECO:0000314"/>
    <property type="project" value="SynGO"/>
</dbReference>
<dbReference type="GO" id="GO:2000300">
    <property type="term" value="P:regulation of synaptic vesicle exocytosis"/>
    <property type="evidence" value="ECO:0000315"/>
    <property type="project" value="MGI"/>
</dbReference>
<dbReference type="GO" id="GO:0016081">
    <property type="term" value="P:synaptic vesicle docking"/>
    <property type="evidence" value="ECO:0000318"/>
    <property type="project" value="GO_Central"/>
</dbReference>
<dbReference type="GO" id="GO:0016082">
    <property type="term" value="P:synaptic vesicle priming"/>
    <property type="evidence" value="ECO:0000318"/>
    <property type="project" value="GO_Central"/>
</dbReference>
<dbReference type="FunFam" id="2.60.40.150:FF:000001">
    <property type="entry name" value="Regulating synaptic membrane exocytosis 3, isoform CRA_a"/>
    <property type="match status" value="1"/>
</dbReference>
<dbReference type="Gene3D" id="2.60.40.150">
    <property type="entry name" value="C2 domain"/>
    <property type="match status" value="1"/>
</dbReference>
<dbReference type="InterPro" id="IPR000008">
    <property type="entry name" value="C2_dom"/>
</dbReference>
<dbReference type="InterPro" id="IPR035892">
    <property type="entry name" value="C2_domain_sf"/>
</dbReference>
<dbReference type="InterPro" id="IPR039032">
    <property type="entry name" value="Rim-like"/>
</dbReference>
<dbReference type="PANTHER" id="PTHR12157">
    <property type="entry name" value="REGULATING SYNAPTIC MEMBRANE EXOCYTOSIS PROTEIN"/>
    <property type="match status" value="1"/>
</dbReference>
<dbReference type="PANTHER" id="PTHR12157:SF25">
    <property type="entry name" value="REGULATING SYNAPTIC MEMBRANE EXOCYTOSIS PROTEIN 3"/>
    <property type="match status" value="1"/>
</dbReference>
<dbReference type="Pfam" id="PF00168">
    <property type="entry name" value="C2"/>
    <property type="match status" value="1"/>
</dbReference>
<dbReference type="SMART" id="SM00239">
    <property type="entry name" value="C2"/>
    <property type="match status" value="1"/>
</dbReference>
<dbReference type="SUPFAM" id="SSF49562">
    <property type="entry name" value="C2 domain (Calcium/lipid-binding domain, CaLB)"/>
    <property type="match status" value="1"/>
</dbReference>
<dbReference type="PROSITE" id="PS50004">
    <property type="entry name" value="C2"/>
    <property type="match status" value="1"/>
</dbReference>
<accession>Q9JIR3</accession>
<protein>
    <recommendedName>
        <fullName>Regulating synaptic membrane exocytosis protein 3</fullName>
        <shortName>Nim3</shortName>
    </recommendedName>
    <alternativeName>
        <fullName>RIM3 gamma</fullName>
    </alternativeName>
    <alternativeName>
        <fullName>Rab-3-interacting molecule 3</fullName>
        <shortName>RIM 3</shortName>
    </alternativeName>
</protein>
<reference key="1">
    <citation type="journal article" date="2000" name="J. Biol. Chem.">
        <title>The RIM/NIM family of neuronal C2 domain proteins. Interactions with Rab3 and a new class of Src homology 3 domain proteins.</title>
        <authorList>
            <person name="Wang Y."/>
            <person name="Sugita S."/>
            <person name="Suedhof T.C."/>
        </authorList>
    </citation>
    <scope>NUCLEOTIDE SEQUENCE [MRNA]</scope>
    <scope>TISSUE SPECIFICITY</scope>
    <scope>FUNCTION</scope>
    <source>
        <tissue>Brain</tissue>
    </source>
</reference>
<reference key="2">
    <citation type="journal article" date="2003" name="Genomics">
        <title>Genomic definition of RIM proteins: evolutionary amplification of a family of synaptic regulatory proteins.</title>
        <authorList>
            <person name="Wang Y."/>
            <person name="Suedhof T.C."/>
        </authorList>
    </citation>
    <scope>INTERACTION WITH PPFIA3</scope>
    <scope>TISSUE SPECIFICITY</scope>
</reference>
<reference key="3">
    <citation type="journal article" date="2012" name="Nat. Commun.">
        <title>Quantitative maps of protein phosphorylation sites across 14 different rat organs and tissues.</title>
        <authorList>
            <person name="Lundby A."/>
            <person name="Secher A."/>
            <person name="Lage K."/>
            <person name="Nordsborg N.B."/>
            <person name="Dmytriyev A."/>
            <person name="Lundby C."/>
            <person name="Olsen J.V."/>
        </authorList>
    </citation>
    <scope>PHOSPHORYLATION [LARGE SCALE ANALYSIS] AT SER-294</scope>
    <scope>IDENTIFICATION BY MASS SPECTROMETRY [LARGE SCALE ANALYSIS]</scope>
</reference>
<comment type="function">
    <text evidence="5">Regulates synaptic membrane exocytosis.</text>
</comment>
<comment type="subunit">
    <text>Binds PPFIA3. Does not bind RAB3.</text>
</comment>
<comment type="subcellular location">
    <subcellularLocation>
        <location evidence="1">Synapse</location>
    </subcellularLocation>
</comment>
<comment type="tissue specificity">
    <text evidence="5 6">Expressed exclusively in brain with significant levels in cortex, cerebellum and olfactory bulb. Detected at lower level in hippocampus.</text>
</comment>
<proteinExistence type="evidence at protein level"/>
<evidence type="ECO:0000250" key="1"/>
<evidence type="ECO:0000250" key="2">
    <source>
        <dbReference type="UniProtKB" id="Q80U57"/>
    </source>
</evidence>
<evidence type="ECO:0000255" key="3">
    <source>
        <dbReference type="PROSITE-ProRule" id="PRU00041"/>
    </source>
</evidence>
<evidence type="ECO:0000256" key="4">
    <source>
        <dbReference type="SAM" id="MobiDB-lite"/>
    </source>
</evidence>
<evidence type="ECO:0000269" key="5">
    <source>
    </source>
</evidence>
<evidence type="ECO:0000269" key="6">
    <source>
    </source>
</evidence>
<evidence type="ECO:0007744" key="7">
    <source>
    </source>
</evidence>
<name>RIMS3_RAT</name>
<feature type="chain" id="PRO_0000190206" description="Regulating synaptic membrane exocytosis protein 3">
    <location>
        <begin position="1"/>
        <end position="307"/>
    </location>
</feature>
<feature type="domain" description="C2" evidence="3">
    <location>
        <begin position="155"/>
        <end position="273"/>
    </location>
</feature>
<feature type="region of interest" description="Disordered" evidence="4">
    <location>
        <begin position="86"/>
        <end position="120"/>
    </location>
</feature>
<feature type="compositionally biased region" description="Polar residues" evidence="4">
    <location>
        <begin position="109"/>
        <end position="119"/>
    </location>
</feature>
<feature type="modified residue" description="Phosphoserine" evidence="7">
    <location>
        <position position="294"/>
    </location>
</feature>
<feature type="modified residue" description="Phosphoserine" evidence="2">
    <location>
        <position position="297"/>
    </location>
</feature>
<organism>
    <name type="scientific">Rattus norvegicus</name>
    <name type="common">Rat</name>
    <dbReference type="NCBI Taxonomy" id="10116"/>
    <lineage>
        <taxon>Eukaryota</taxon>
        <taxon>Metazoa</taxon>
        <taxon>Chordata</taxon>
        <taxon>Craniata</taxon>
        <taxon>Vertebrata</taxon>
        <taxon>Euteleostomi</taxon>
        <taxon>Mammalia</taxon>
        <taxon>Eutheria</taxon>
        <taxon>Euarchontoglires</taxon>
        <taxon>Glires</taxon>
        <taxon>Rodentia</taxon>
        <taxon>Myomorpha</taxon>
        <taxon>Muroidea</taxon>
        <taxon>Muridae</taxon>
        <taxon>Murinae</taxon>
        <taxon>Rattus</taxon>
    </lineage>
</organism>
<keyword id="KW-0268">Exocytosis</keyword>
<keyword id="KW-0532">Neurotransmitter transport</keyword>
<keyword id="KW-0597">Phosphoprotein</keyword>
<keyword id="KW-1185">Reference proteome</keyword>
<keyword id="KW-0770">Synapse</keyword>
<keyword id="KW-0813">Transport</keyword>